<organism>
    <name type="scientific">Neisseria gonorrhoeae (strain ATCC 700825 / FA 1090)</name>
    <dbReference type="NCBI Taxonomy" id="242231"/>
    <lineage>
        <taxon>Bacteria</taxon>
        <taxon>Pseudomonadati</taxon>
        <taxon>Pseudomonadota</taxon>
        <taxon>Betaproteobacteria</taxon>
        <taxon>Neisseriales</taxon>
        <taxon>Neisseriaceae</taxon>
        <taxon>Neisseria</taxon>
    </lineage>
</organism>
<name>GYRB_NEIG1</name>
<keyword id="KW-0067">ATP-binding</keyword>
<keyword id="KW-0963">Cytoplasm</keyword>
<keyword id="KW-0238">DNA-binding</keyword>
<keyword id="KW-0413">Isomerase</keyword>
<keyword id="KW-0460">Magnesium</keyword>
<keyword id="KW-0479">Metal-binding</keyword>
<keyword id="KW-0547">Nucleotide-binding</keyword>
<keyword id="KW-1185">Reference proteome</keyword>
<keyword id="KW-0799">Topoisomerase</keyword>
<evidence type="ECO:0000255" key="1">
    <source>
        <dbReference type="HAMAP-Rule" id="MF_01898"/>
    </source>
</evidence>
<evidence type="ECO:0000312" key="2">
    <source>
        <dbReference type="EMBL" id="AAW90391.1"/>
    </source>
</evidence>
<proteinExistence type="inferred from homology"/>
<feature type="chain" id="PRO_0000457996" description="DNA gyrase subunit B">
    <location>
        <begin position="1"/>
        <end position="796"/>
    </location>
</feature>
<feature type="domain" description="Toprim" evidence="1">
    <location>
        <begin position="421"/>
        <end position="536"/>
    </location>
</feature>
<feature type="binding site" evidence="1">
    <location>
        <position position="427"/>
    </location>
    <ligand>
        <name>Mg(2+)</name>
        <dbReference type="ChEBI" id="CHEBI:18420"/>
        <label>1</label>
        <note>catalytic</note>
    </ligand>
</feature>
<feature type="binding site" evidence="1">
    <location>
        <position position="501"/>
    </location>
    <ligand>
        <name>Mg(2+)</name>
        <dbReference type="ChEBI" id="CHEBI:18420"/>
        <label>1</label>
        <note>catalytic</note>
    </ligand>
</feature>
<feature type="binding site" evidence="1">
    <location>
        <position position="501"/>
    </location>
    <ligand>
        <name>Mg(2+)</name>
        <dbReference type="ChEBI" id="CHEBI:18420"/>
        <label>2</label>
    </ligand>
</feature>
<feature type="binding site" evidence="1">
    <location>
        <position position="503"/>
    </location>
    <ligand>
        <name>Mg(2+)</name>
        <dbReference type="ChEBI" id="CHEBI:18420"/>
        <label>2</label>
    </ligand>
</feature>
<feature type="site" description="Interaction with DNA" evidence="1">
    <location>
        <position position="452"/>
    </location>
</feature>
<feature type="site" description="Interaction with DNA" evidence="1">
    <location>
        <position position="455"/>
    </location>
</feature>
<accession>Q5F5Z6</accession>
<dbReference type="EC" id="5.6.2.2" evidence="1"/>
<dbReference type="EMBL" id="AE004969">
    <property type="protein sequence ID" value="AAW90391.1"/>
    <property type="molecule type" value="Genomic_DNA"/>
</dbReference>
<dbReference type="RefSeq" id="WP_003689984.1">
    <property type="nucleotide sequence ID" value="NC_002946.2"/>
</dbReference>
<dbReference type="RefSeq" id="YP_208803.1">
    <property type="nucleotide sequence ID" value="NC_002946.2"/>
</dbReference>
<dbReference type="SMR" id="Q5F5Z6"/>
<dbReference type="STRING" id="242231.NGO_1772"/>
<dbReference type="GeneID" id="66754375"/>
<dbReference type="KEGG" id="ngo:NGO_1772"/>
<dbReference type="PATRIC" id="fig|242231.10.peg.2128"/>
<dbReference type="HOGENOM" id="CLU_006146_0_1_4"/>
<dbReference type="Proteomes" id="UP000000535">
    <property type="component" value="Chromosome"/>
</dbReference>
<dbReference type="GO" id="GO:0005694">
    <property type="term" value="C:chromosome"/>
    <property type="evidence" value="ECO:0007669"/>
    <property type="project" value="InterPro"/>
</dbReference>
<dbReference type="GO" id="GO:0005737">
    <property type="term" value="C:cytoplasm"/>
    <property type="evidence" value="ECO:0007669"/>
    <property type="project" value="UniProtKB-SubCell"/>
</dbReference>
<dbReference type="GO" id="GO:0005524">
    <property type="term" value="F:ATP binding"/>
    <property type="evidence" value="ECO:0007669"/>
    <property type="project" value="UniProtKB-UniRule"/>
</dbReference>
<dbReference type="GO" id="GO:0003677">
    <property type="term" value="F:DNA binding"/>
    <property type="evidence" value="ECO:0007669"/>
    <property type="project" value="UniProtKB-KW"/>
</dbReference>
<dbReference type="GO" id="GO:0003918">
    <property type="term" value="F:DNA topoisomerase type II (double strand cut, ATP-hydrolyzing) activity"/>
    <property type="evidence" value="ECO:0007669"/>
    <property type="project" value="UniProtKB-UniRule"/>
</dbReference>
<dbReference type="GO" id="GO:0046872">
    <property type="term" value="F:metal ion binding"/>
    <property type="evidence" value="ECO:0007669"/>
    <property type="project" value="UniProtKB-KW"/>
</dbReference>
<dbReference type="GO" id="GO:0006265">
    <property type="term" value="P:DNA topological change"/>
    <property type="evidence" value="ECO:0007669"/>
    <property type="project" value="UniProtKB-UniRule"/>
</dbReference>
<dbReference type="GO" id="GO:0006261">
    <property type="term" value="P:DNA-templated DNA replication"/>
    <property type="evidence" value="ECO:0007669"/>
    <property type="project" value="UniProtKB-UniRule"/>
</dbReference>
<dbReference type="CDD" id="cd16928">
    <property type="entry name" value="HATPase_GyrB-like"/>
    <property type="match status" value="1"/>
</dbReference>
<dbReference type="CDD" id="cd00822">
    <property type="entry name" value="TopoII_Trans_DNA_gyrase"/>
    <property type="match status" value="1"/>
</dbReference>
<dbReference type="CDD" id="cd03366">
    <property type="entry name" value="TOPRIM_TopoIIA_GyrB"/>
    <property type="match status" value="1"/>
</dbReference>
<dbReference type="FunFam" id="3.30.230.10:FF:000005">
    <property type="entry name" value="DNA gyrase subunit B"/>
    <property type="match status" value="1"/>
</dbReference>
<dbReference type="FunFam" id="3.30.565.10:FF:000002">
    <property type="entry name" value="DNA gyrase subunit B"/>
    <property type="match status" value="1"/>
</dbReference>
<dbReference type="FunFam" id="3.40.50.670:FF:000004">
    <property type="entry name" value="DNA gyrase subunit B"/>
    <property type="match status" value="1"/>
</dbReference>
<dbReference type="FunFam" id="3.40.50.670:FF:000007">
    <property type="entry name" value="DNA gyrase subunit B"/>
    <property type="match status" value="1"/>
</dbReference>
<dbReference type="Gene3D" id="3.30.230.10">
    <property type="match status" value="1"/>
</dbReference>
<dbReference type="Gene3D" id="3.40.50.670">
    <property type="match status" value="2"/>
</dbReference>
<dbReference type="Gene3D" id="3.30.565.10">
    <property type="entry name" value="Histidine kinase-like ATPase, C-terminal domain"/>
    <property type="match status" value="1"/>
</dbReference>
<dbReference type="HAMAP" id="MF_01898">
    <property type="entry name" value="GyrB"/>
    <property type="match status" value="1"/>
</dbReference>
<dbReference type="InterPro" id="IPR002288">
    <property type="entry name" value="DNA_gyrase_B_C"/>
</dbReference>
<dbReference type="InterPro" id="IPR011557">
    <property type="entry name" value="GyrB"/>
</dbReference>
<dbReference type="InterPro" id="IPR049353">
    <property type="entry name" value="GyrB_hook"/>
</dbReference>
<dbReference type="InterPro" id="IPR041423">
    <property type="entry name" value="GyrB_insert"/>
</dbReference>
<dbReference type="InterPro" id="IPR036890">
    <property type="entry name" value="HATPase_C_sf"/>
</dbReference>
<dbReference type="InterPro" id="IPR020568">
    <property type="entry name" value="Ribosomal_Su5_D2-typ_SF"/>
</dbReference>
<dbReference type="InterPro" id="IPR014721">
    <property type="entry name" value="Ribsml_uS5_D2-typ_fold_subgr"/>
</dbReference>
<dbReference type="InterPro" id="IPR001241">
    <property type="entry name" value="Topo_IIA"/>
</dbReference>
<dbReference type="InterPro" id="IPR013760">
    <property type="entry name" value="Topo_IIA-like_dom_sf"/>
</dbReference>
<dbReference type="InterPro" id="IPR000565">
    <property type="entry name" value="Topo_IIA_B"/>
</dbReference>
<dbReference type="InterPro" id="IPR013759">
    <property type="entry name" value="Topo_IIA_B_C"/>
</dbReference>
<dbReference type="InterPro" id="IPR013506">
    <property type="entry name" value="Topo_IIA_bsu_dom2"/>
</dbReference>
<dbReference type="InterPro" id="IPR018522">
    <property type="entry name" value="TopoIIA_CS"/>
</dbReference>
<dbReference type="InterPro" id="IPR006171">
    <property type="entry name" value="TOPRIM_dom"/>
</dbReference>
<dbReference type="InterPro" id="IPR034160">
    <property type="entry name" value="TOPRIM_GyrB"/>
</dbReference>
<dbReference type="NCBIfam" id="TIGR01059">
    <property type="entry name" value="gyrB"/>
    <property type="match status" value="1"/>
</dbReference>
<dbReference type="NCBIfam" id="NF004189">
    <property type="entry name" value="PRK05644.1"/>
    <property type="match status" value="1"/>
</dbReference>
<dbReference type="NCBIfam" id="NF011501">
    <property type="entry name" value="PRK14939.1"/>
    <property type="match status" value="1"/>
</dbReference>
<dbReference type="PANTHER" id="PTHR45866:SF1">
    <property type="entry name" value="DNA GYRASE SUBUNIT B, MITOCHONDRIAL"/>
    <property type="match status" value="1"/>
</dbReference>
<dbReference type="PANTHER" id="PTHR45866">
    <property type="entry name" value="DNA GYRASE/TOPOISOMERASE SUBUNIT B"/>
    <property type="match status" value="1"/>
</dbReference>
<dbReference type="Pfam" id="PF00204">
    <property type="entry name" value="DNA_gyraseB"/>
    <property type="match status" value="1"/>
</dbReference>
<dbReference type="Pfam" id="PF00986">
    <property type="entry name" value="DNA_gyraseB_C"/>
    <property type="match status" value="1"/>
</dbReference>
<dbReference type="Pfam" id="PF21249">
    <property type="entry name" value="GyrB_hook"/>
    <property type="match status" value="1"/>
</dbReference>
<dbReference type="Pfam" id="PF18053">
    <property type="entry name" value="GyrB_insert"/>
    <property type="match status" value="1"/>
</dbReference>
<dbReference type="Pfam" id="PF02518">
    <property type="entry name" value="HATPase_c"/>
    <property type="match status" value="1"/>
</dbReference>
<dbReference type="Pfam" id="PF01751">
    <property type="entry name" value="Toprim"/>
    <property type="match status" value="1"/>
</dbReference>
<dbReference type="PRINTS" id="PR01159">
    <property type="entry name" value="DNAGYRASEB"/>
</dbReference>
<dbReference type="PRINTS" id="PR00418">
    <property type="entry name" value="TPI2FAMILY"/>
</dbReference>
<dbReference type="SMART" id="SM00387">
    <property type="entry name" value="HATPase_c"/>
    <property type="match status" value="1"/>
</dbReference>
<dbReference type="SMART" id="SM00433">
    <property type="entry name" value="TOP2c"/>
    <property type="match status" value="1"/>
</dbReference>
<dbReference type="SUPFAM" id="SSF55874">
    <property type="entry name" value="ATPase domain of HSP90 chaperone/DNA topoisomerase II/histidine kinase"/>
    <property type="match status" value="1"/>
</dbReference>
<dbReference type="SUPFAM" id="SSF54211">
    <property type="entry name" value="Ribosomal protein S5 domain 2-like"/>
    <property type="match status" value="1"/>
</dbReference>
<dbReference type="SUPFAM" id="SSF56719">
    <property type="entry name" value="Type II DNA topoisomerase"/>
    <property type="match status" value="1"/>
</dbReference>
<dbReference type="PROSITE" id="PS00177">
    <property type="entry name" value="TOPOISOMERASE_II"/>
    <property type="match status" value="1"/>
</dbReference>
<dbReference type="PROSITE" id="PS50880">
    <property type="entry name" value="TOPRIM"/>
    <property type="match status" value="1"/>
</dbReference>
<protein>
    <recommendedName>
        <fullName evidence="1">DNA gyrase subunit B</fullName>
        <ecNumber evidence="1">5.6.2.2</ecNumber>
    </recommendedName>
</protein>
<sequence length="796" mass="88209">MTEQKHEEYGADSIQVLEGLEAVRKRPGMYIGDTQDGSGLHHMVFEVLDNAIDEALAGHCDKITVTIHADHSVSVADNGRGMPTGIHPKEGRSAAEVIMTVLHAGGKFDNNSYKISGGLHGVGVSVVNALSDWVTLTIYRDGKEHFVRFVRGETEEPLKIVGDSDKKGTTVRFLAGTETFGNIEYSFDILAKRIRELSFLNNGVDIELTDERDGKHESFALSGGVAGFVQYMNRKKTPLHEKIFYAFGEKDGMSVECAMQWNDSYQESVQCFTNNIPQRDGGTHLTALRQVMTRTINSYIEANEVAKKAKVETAGDDMREGLTCVLSVKLPDPKFSSQTKDKLVSGEIGPVVNEVINQALTDFLEENPNEAKIITGKIVDAARAREAARKAREITRRKGVMDGLGLPGKLADCQEKDPALSELYLVEGDSAGGSAMQGRDRKFQAILPLKGKILNVEKARFEKMLASQEVATLITALGAGIGKEEFNPEKLRYHRIIIMTDADVDGAHIRTLLLTFFYRQMPELVERGYIYIAQPPLYKAKYGKQERYLKDELEKDQWLLGLALEKAKIVSDGRTIEGAELADTAKQFLLAKTVIEQESRFVDELVLRAMLHASPIDLTSSENADKAVAELSGLLDEKEAALERIEGHEGHRFIKITRKLHGNVMVSYIEPKFLNSKAYQTLTQTAAALKGLVGEGAKLYKGENEYDADSFETALDILMSVAQKGMSIQRYKGLGEMNPEQLWETTMDPAVRRLLKVRIEDAIAADEVFVTLMGDEVEPRRAFIENNALIAQNIDA</sequence>
<comment type="function">
    <text evidence="1">A type II topoisomerase that negatively supercoils closed circular double-stranded (ds) DNA in an ATP-dependent manner to modulate DNA topology and maintain chromosomes in an underwound state. Negative supercoiling favors strand separation, and DNA replication, transcription, recombination and repair, all of which involve strand separation. Also able to catalyze the interconversion of other topological isomers of dsDNA rings, including catenanes and knotted rings. Type II topoisomerases break and join 2 DNA strands simultaneously in an ATP-dependent manner.</text>
</comment>
<comment type="catalytic activity">
    <reaction evidence="1">
        <text>ATP-dependent breakage, passage and rejoining of double-stranded DNA.</text>
        <dbReference type="EC" id="5.6.2.2"/>
    </reaction>
</comment>
<comment type="cofactor">
    <cofactor evidence="1">
        <name>Mg(2+)</name>
        <dbReference type="ChEBI" id="CHEBI:18420"/>
    </cofactor>
    <cofactor evidence="1">
        <name>Mn(2+)</name>
        <dbReference type="ChEBI" id="CHEBI:29035"/>
    </cofactor>
    <cofactor evidence="1">
        <name>Ca(2+)</name>
        <dbReference type="ChEBI" id="CHEBI:29108"/>
    </cofactor>
    <text evidence="1">Binds two Mg(2+) per subunit. The magnesium ions form salt bridges with both the protein and the DNA. Can also accept other divalent metal cations, such as Mn(2+) or Ca(2+).</text>
</comment>
<comment type="subunit">
    <text evidence="1">Heterotetramer, composed of two GyrA and two GyrB chains. In the heterotetramer, GyrA contains the active site tyrosine that forms a transient covalent intermediate with DNA, while GyrB binds cofactors and catalyzes ATP hydrolysis.</text>
</comment>
<comment type="subcellular location">
    <subcellularLocation>
        <location evidence="1">Cytoplasm</location>
    </subcellularLocation>
</comment>
<comment type="miscellaneous">
    <text evidence="1">Few gyrases are as efficient as E.coli at forming negative supercoils. Not all organisms have 2 type II topoisomerases; in organisms with a single type II topoisomerase this enzyme also has to decatenate newly replicated chromosomes.</text>
</comment>
<comment type="similarity">
    <text evidence="1">Belongs to the type II topoisomerase GyrB family.</text>
</comment>
<gene>
    <name evidence="1 2" type="primary">gyrB</name>
    <name evidence="2" type="ordered locus">NGO_1772</name>
</gene>
<reference evidence="2" key="1">
    <citation type="submission" date="2003-03" db="EMBL/GenBank/DDBJ databases">
        <title>The complete genome sequence of Neisseria gonorrhoeae.</title>
        <authorList>
            <person name="Lewis L.A."/>
            <person name="Gillaspy A.F."/>
            <person name="McLaughlin R.E."/>
            <person name="Gipson M."/>
            <person name="Ducey T.F."/>
            <person name="Ownbey T."/>
            <person name="Hartman K."/>
            <person name="Nydick C."/>
            <person name="Carson M.B."/>
            <person name="Vaughn J."/>
            <person name="Thomson C."/>
            <person name="Song L."/>
            <person name="Lin S."/>
            <person name="Yuan X."/>
            <person name="Najar F."/>
            <person name="Zhan M."/>
            <person name="Ren Q."/>
            <person name="Zhu H."/>
            <person name="Qi S."/>
            <person name="Kenton S.M."/>
            <person name="Lai H."/>
            <person name="White J.D."/>
            <person name="Clifton S."/>
            <person name="Roe B.A."/>
            <person name="Dyer D.W."/>
        </authorList>
    </citation>
    <scope>NUCLEOTIDE SEQUENCE [LARGE SCALE GENOMIC DNA]</scope>
    <source>
        <strain>ATCC 700825 / FA 1090</strain>
    </source>
</reference>